<sequence>MSDKLLTIDLSHVYGFDKEIIFKKYQKKVDQIHQDFLAHKLADGHMTGWYDQPDQNHQFLLKTINQIDKKFKSLKVTDIVYVGIGGSFTGIKTVLDFLKPKQRTGLKIHFVPDLSAFQAASVIKEIKNKSWALITTSKSGRTLEPALNFRIFRNLLNKRYGNKHYQRVVVITDEKKGLLTKMASNHGYQKLVIDSNIGGRFSTLSPAGLLLAKLFGHDPKAILKGTLQAKKDLQTTSLENNSAYLYAVVRHWLYTTKKFKIEVCIAYHSLYEYLLLQHRQLFGESEGKNDKSLFPTFSIFTVDLHSMGQLYQEGEKVFFETVIDVKNPLVNINLPPSDFDNDDELDFLLDKSLNEISDVAIDSVIKAHYQANVSIIKLTLKEQSAFMFGYFYFWLSVATVMSGSLLGHNVFNQPGVEVYKKLMFEKLRSGH</sequence>
<reference key="1">
    <citation type="journal article" date="1995" name="Science">
        <title>The minimal gene complement of Mycoplasma genitalium.</title>
        <authorList>
            <person name="Fraser C.M."/>
            <person name="Gocayne J.D."/>
            <person name="White O."/>
            <person name="Adams M.D."/>
            <person name="Clayton R.A."/>
            <person name="Fleischmann R.D."/>
            <person name="Bult C.J."/>
            <person name="Kerlavage A.R."/>
            <person name="Sutton G.G."/>
            <person name="Kelley J.M."/>
            <person name="Fritchman J.L."/>
            <person name="Weidman J.F."/>
            <person name="Small K.V."/>
            <person name="Sandusky M."/>
            <person name="Fuhrmann J.L."/>
            <person name="Nguyen D.T."/>
            <person name="Utterback T.R."/>
            <person name="Saudek D.M."/>
            <person name="Phillips C.A."/>
            <person name="Merrick J.M."/>
            <person name="Tomb J.-F."/>
            <person name="Dougherty B.A."/>
            <person name="Bott K.F."/>
            <person name="Hu P.-C."/>
            <person name="Lucier T.S."/>
            <person name="Peterson S.N."/>
            <person name="Smith H.O."/>
            <person name="Hutchison C.A. III"/>
            <person name="Venter J.C."/>
        </authorList>
    </citation>
    <scope>NUCLEOTIDE SEQUENCE [LARGE SCALE GENOMIC DNA]</scope>
    <source>
        <strain>ATCC 33530 / DSM 19775 / NCTC 10195 / G37</strain>
    </source>
</reference>
<reference key="2">
    <citation type="journal article" date="1993" name="J. Bacteriol.">
        <title>A survey of the Mycoplasma genitalium genome by using random sequencing.</title>
        <authorList>
            <person name="Peterson S.N."/>
            <person name="Hu P.-C."/>
            <person name="Bott K.F."/>
            <person name="Hutchison C.A. III"/>
        </authorList>
    </citation>
    <scope>NUCLEOTIDE SEQUENCE [GENOMIC DNA] OF 1-30</scope>
    <source>
        <strain>ATCC 33530 / DSM 19775 / NCTC 10195 / G37</strain>
    </source>
</reference>
<organism>
    <name type="scientific">Mycoplasma genitalium (strain ATCC 33530 / DSM 19775 / NCTC 10195 / G37)</name>
    <name type="common">Mycoplasmoides genitalium</name>
    <dbReference type="NCBI Taxonomy" id="243273"/>
    <lineage>
        <taxon>Bacteria</taxon>
        <taxon>Bacillati</taxon>
        <taxon>Mycoplasmatota</taxon>
        <taxon>Mycoplasmoidales</taxon>
        <taxon>Mycoplasmoidaceae</taxon>
        <taxon>Mycoplasmoides</taxon>
    </lineage>
</organism>
<gene>
    <name evidence="1" type="primary">pgi</name>
    <name type="ordered locus">MG111</name>
</gene>
<protein>
    <recommendedName>
        <fullName evidence="1">Glucose-6-phosphate isomerase</fullName>
        <shortName evidence="1">GPI</shortName>
        <ecNumber evidence="1">5.3.1.9</ecNumber>
    </recommendedName>
    <alternativeName>
        <fullName evidence="1">Phosphoglucose isomerase</fullName>
        <shortName evidence="1">PGI</shortName>
    </alternativeName>
    <alternativeName>
        <fullName evidence="1">Phosphohexose isomerase</fullName>
        <shortName evidence="1">PHI</shortName>
    </alternativeName>
</protein>
<evidence type="ECO:0000255" key="1">
    <source>
        <dbReference type="HAMAP-Rule" id="MF_00473"/>
    </source>
</evidence>
<evidence type="ECO:0000305" key="2"/>
<accession>P47357</accession>
<accession>Q49449</accession>
<proteinExistence type="inferred from homology"/>
<comment type="function">
    <text evidence="1">Catalyzes the reversible isomerization of glucose-6-phosphate to fructose-6-phosphate.</text>
</comment>
<comment type="catalytic activity">
    <reaction evidence="1">
        <text>alpha-D-glucose 6-phosphate = beta-D-fructose 6-phosphate</text>
        <dbReference type="Rhea" id="RHEA:11816"/>
        <dbReference type="ChEBI" id="CHEBI:57634"/>
        <dbReference type="ChEBI" id="CHEBI:58225"/>
        <dbReference type="EC" id="5.3.1.9"/>
    </reaction>
</comment>
<comment type="pathway">
    <text evidence="1">Carbohydrate biosynthesis; gluconeogenesis.</text>
</comment>
<comment type="pathway">
    <text evidence="1">Carbohydrate degradation; glycolysis; D-glyceraldehyde 3-phosphate and glycerone phosphate from D-glucose: step 2/4.</text>
</comment>
<comment type="subcellular location">
    <subcellularLocation>
        <location evidence="1">Cytoplasm</location>
    </subcellularLocation>
</comment>
<comment type="similarity">
    <text evidence="1 2">Belongs to the GPI family.</text>
</comment>
<comment type="sequence caution" evidence="2">
    <conflict type="erroneous initiation">
        <sequence resource="EMBL-CDS" id="AAC71329"/>
    </conflict>
</comment>
<comment type="sequence caution" evidence="2">
    <conflict type="erroneous initiation">
        <sequence resource="EMBL-CDS" id="AAD10560"/>
    </conflict>
</comment>
<name>G6PI_MYCGE</name>
<keyword id="KW-0963">Cytoplasm</keyword>
<keyword id="KW-0312">Gluconeogenesis</keyword>
<keyword id="KW-0324">Glycolysis</keyword>
<keyword id="KW-0413">Isomerase</keyword>
<keyword id="KW-1185">Reference proteome</keyword>
<dbReference type="EC" id="5.3.1.9" evidence="1"/>
<dbReference type="EMBL" id="L43967">
    <property type="protein sequence ID" value="AAC71329.1"/>
    <property type="status" value="ALT_INIT"/>
    <property type="molecule type" value="Genomic_DNA"/>
</dbReference>
<dbReference type="EMBL" id="U01747">
    <property type="protein sequence ID" value="AAD10560.1"/>
    <property type="status" value="ALT_INIT"/>
    <property type="molecule type" value="Genomic_DNA"/>
</dbReference>
<dbReference type="RefSeq" id="WP_010869336.1">
    <property type="nucleotide sequence ID" value="NC_000908.2"/>
</dbReference>
<dbReference type="SMR" id="P47357"/>
<dbReference type="FunCoup" id="P47357">
    <property type="interactions" value="172"/>
</dbReference>
<dbReference type="STRING" id="243273.MG_111"/>
<dbReference type="GeneID" id="88282235"/>
<dbReference type="KEGG" id="mge:MG_111"/>
<dbReference type="eggNOG" id="COG0166">
    <property type="taxonomic scope" value="Bacteria"/>
</dbReference>
<dbReference type="HOGENOM" id="CLU_037303_0_1_14"/>
<dbReference type="InParanoid" id="P47357"/>
<dbReference type="OrthoDB" id="140919at2"/>
<dbReference type="BioCyc" id="MGEN243273:G1GJ2-124-MONOMER"/>
<dbReference type="UniPathway" id="UPA00109">
    <property type="reaction ID" value="UER00181"/>
</dbReference>
<dbReference type="UniPathway" id="UPA00138"/>
<dbReference type="Proteomes" id="UP000000807">
    <property type="component" value="Chromosome"/>
</dbReference>
<dbReference type="GO" id="GO:0005829">
    <property type="term" value="C:cytosol"/>
    <property type="evidence" value="ECO:0000318"/>
    <property type="project" value="GO_Central"/>
</dbReference>
<dbReference type="GO" id="GO:0097367">
    <property type="term" value="F:carbohydrate derivative binding"/>
    <property type="evidence" value="ECO:0007669"/>
    <property type="project" value="InterPro"/>
</dbReference>
<dbReference type="GO" id="GO:0004347">
    <property type="term" value="F:glucose-6-phosphate isomerase activity"/>
    <property type="evidence" value="ECO:0000318"/>
    <property type="project" value="GO_Central"/>
</dbReference>
<dbReference type="GO" id="GO:0048029">
    <property type="term" value="F:monosaccharide binding"/>
    <property type="evidence" value="ECO:0000318"/>
    <property type="project" value="GO_Central"/>
</dbReference>
<dbReference type="GO" id="GO:0006094">
    <property type="term" value="P:gluconeogenesis"/>
    <property type="evidence" value="ECO:0000318"/>
    <property type="project" value="GO_Central"/>
</dbReference>
<dbReference type="GO" id="GO:0051156">
    <property type="term" value="P:glucose 6-phosphate metabolic process"/>
    <property type="evidence" value="ECO:0000318"/>
    <property type="project" value="GO_Central"/>
</dbReference>
<dbReference type="GO" id="GO:0006096">
    <property type="term" value="P:glycolytic process"/>
    <property type="evidence" value="ECO:0000318"/>
    <property type="project" value="GO_Central"/>
</dbReference>
<dbReference type="CDD" id="cd05015">
    <property type="entry name" value="SIS_PGI_1"/>
    <property type="match status" value="1"/>
</dbReference>
<dbReference type="CDD" id="cd05016">
    <property type="entry name" value="SIS_PGI_2"/>
    <property type="match status" value="1"/>
</dbReference>
<dbReference type="FunFam" id="3.40.50.10490:FF:000016">
    <property type="entry name" value="Glucose-6-phosphate isomerase"/>
    <property type="match status" value="1"/>
</dbReference>
<dbReference type="Gene3D" id="3.40.50.10490">
    <property type="entry name" value="Glucose-6-phosphate isomerase like protein, domain 1"/>
    <property type="match status" value="2"/>
</dbReference>
<dbReference type="HAMAP" id="MF_00473">
    <property type="entry name" value="G6P_isomerase"/>
    <property type="match status" value="1"/>
</dbReference>
<dbReference type="InterPro" id="IPR001672">
    <property type="entry name" value="G6P_Isomerase"/>
</dbReference>
<dbReference type="InterPro" id="IPR018189">
    <property type="entry name" value="Phosphoglucose_isomerase_CS"/>
</dbReference>
<dbReference type="InterPro" id="IPR046348">
    <property type="entry name" value="SIS_dom_sf"/>
</dbReference>
<dbReference type="InterPro" id="IPR035476">
    <property type="entry name" value="SIS_PGI_1"/>
</dbReference>
<dbReference type="InterPro" id="IPR035482">
    <property type="entry name" value="SIS_PGI_2"/>
</dbReference>
<dbReference type="NCBIfam" id="NF010697">
    <property type="entry name" value="PRK14097.1"/>
    <property type="match status" value="1"/>
</dbReference>
<dbReference type="PANTHER" id="PTHR11469">
    <property type="entry name" value="GLUCOSE-6-PHOSPHATE ISOMERASE"/>
    <property type="match status" value="1"/>
</dbReference>
<dbReference type="PANTHER" id="PTHR11469:SF1">
    <property type="entry name" value="GLUCOSE-6-PHOSPHATE ISOMERASE"/>
    <property type="match status" value="1"/>
</dbReference>
<dbReference type="Pfam" id="PF00342">
    <property type="entry name" value="PGI"/>
    <property type="match status" value="1"/>
</dbReference>
<dbReference type="PRINTS" id="PR00662">
    <property type="entry name" value="G6PISOMERASE"/>
</dbReference>
<dbReference type="SUPFAM" id="SSF53697">
    <property type="entry name" value="SIS domain"/>
    <property type="match status" value="1"/>
</dbReference>
<dbReference type="PROSITE" id="PS00765">
    <property type="entry name" value="P_GLUCOSE_ISOMERASE_1"/>
    <property type="match status" value="1"/>
</dbReference>
<dbReference type="PROSITE" id="PS00174">
    <property type="entry name" value="P_GLUCOSE_ISOMERASE_2"/>
    <property type="match status" value="1"/>
</dbReference>
<dbReference type="PROSITE" id="PS51463">
    <property type="entry name" value="P_GLUCOSE_ISOMERASE_3"/>
    <property type="match status" value="1"/>
</dbReference>
<feature type="chain" id="PRO_0000180679" description="Glucose-6-phosphate isomerase">
    <location>
        <begin position="1"/>
        <end position="431"/>
    </location>
</feature>
<feature type="active site" description="Proton donor" evidence="1">
    <location>
        <position position="284"/>
    </location>
</feature>
<feature type="active site" evidence="1">
    <location>
        <position position="305"/>
    </location>
</feature>
<feature type="active site" evidence="1">
    <location>
        <position position="420"/>
    </location>
</feature>